<accession>C0LGX1</accession>
<accession>Q93Y10</accession>
<accession>Q9FJP1</accession>
<sequence>MALLIITALVFSSLWSSVSPDAQGDALFALRSSLRASPEQLSDWNQNQVDPCTWSQVICDDKKHVTSVTLSYMNFSSGTLSSGIGILTTLKTLTLKGNGIMGGIPESIGNLSSLTSLDLEDNHLTDRIPSTLGNLKNLQFLTLSRNNLNGSIPDSLTGLSKLINILLDSNNLSGEIPQSLFKIPKYNFTANNLSCGGTFPQPCVTESSPSGDSSSRKTGIIAGVVSGIAVILLGFFFFFFCKDKHKGYKRDVFVDVAGEVDRRIAFGQLRRFAWRELQLATDEFSEKNVLGQGGFGKVYKGLLSDGTKVAVKRLTDFERPGGDEAFQREVEMISVAVHRNLLRLIGFCTTQTERLLVYPFMQNLSVAYCLREIKPGDPVLDWFRRKQIALGAARGLEYLHEHCNPKIIHRDVKAANVLLDEDFEAVVGDFGLAKLVDVRRTNVTTQVRGTMGHIAPECISTGKSSEKTDVFGYGIMLLELVTGQRAIDFSRLEEEDDVLLLDHVKKLEREKRLEDIVDKKLDEDYIKEEVEMMIQVALLCTQAAPEERPAMSEVVRMLEGEGLAERWEEWQNLEVTRQEEFQRLQRRFDWGEDSINNQDAIELSGGR</sequence>
<reference key="1">
    <citation type="journal article" date="1998" name="DNA Res.">
        <title>Structural analysis of Arabidopsis thaliana chromosome 5. VI. Sequence features of the regions of 1,367,185 bp covered by 19 physically assigned P1 and TAC clones.</title>
        <authorList>
            <person name="Kotani H."/>
            <person name="Nakamura Y."/>
            <person name="Sato S."/>
            <person name="Asamizu E."/>
            <person name="Kaneko T."/>
            <person name="Miyajima N."/>
            <person name="Tabata S."/>
        </authorList>
    </citation>
    <scope>NUCLEOTIDE SEQUENCE [LARGE SCALE GENOMIC DNA]</scope>
    <source>
        <strain>cv. Columbia</strain>
    </source>
</reference>
<reference key="2">
    <citation type="journal article" date="2017" name="Plant J.">
        <title>Araport11: a complete reannotation of the Arabidopsis thaliana reference genome.</title>
        <authorList>
            <person name="Cheng C.Y."/>
            <person name="Krishnakumar V."/>
            <person name="Chan A.P."/>
            <person name="Thibaud-Nissen F."/>
            <person name="Schobel S."/>
            <person name="Town C.D."/>
        </authorList>
    </citation>
    <scope>GENOME REANNOTATION</scope>
    <source>
        <strain>cv. Columbia</strain>
    </source>
</reference>
<reference key="3">
    <citation type="journal article" date="2003" name="Science">
        <title>Empirical analysis of transcriptional activity in the Arabidopsis genome.</title>
        <authorList>
            <person name="Yamada K."/>
            <person name="Lim J."/>
            <person name="Dale J.M."/>
            <person name="Chen H."/>
            <person name="Shinn P."/>
            <person name="Palm C.J."/>
            <person name="Southwick A.M."/>
            <person name="Wu H.C."/>
            <person name="Kim C.J."/>
            <person name="Nguyen M."/>
            <person name="Pham P.K."/>
            <person name="Cheuk R.F."/>
            <person name="Karlin-Newmann G."/>
            <person name="Liu S.X."/>
            <person name="Lam B."/>
            <person name="Sakano H."/>
            <person name="Wu T."/>
            <person name="Yu G."/>
            <person name="Miranda M."/>
            <person name="Quach H.L."/>
            <person name="Tripp M."/>
            <person name="Chang C.H."/>
            <person name="Lee J.M."/>
            <person name="Toriumi M.J."/>
            <person name="Chan M.M."/>
            <person name="Tang C.C."/>
            <person name="Onodera C.S."/>
            <person name="Deng J.M."/>
            <person name="Akiyama K."/>
            <person name="Ansari Y."/>
            <person name="Arakawa T."/>
            <person name="Banh J."/>
            <person name="Banno F."/>
            <person name="Bowser L."/>
            <person name="Brooks S.Y."/>
            <person name="Carninci P."/>
            <person name="Chao Q."/>
            <person name="Choy N."/>
            <person name="Enju A."/>
            <person name="Goldsmith A.D."/>
            <person name="Gurjal M."/>
            <person name="Hansen N.F."/>
            <person name="Hayashizaki Y."/>
            <person name="Johnson-Hopson C."/>
            <person name="Hsuan V.W."/>
            <person name="Iida K."/>
            <person name="Karnes M."/>
            <person name="Khan S."/>
            <person name="Koesema E."/>
            <person name="Ishida J."/>
            <person name="Jiang P.X."/>
            <person name="Jones T."/>
            <person name="Kawai J."/>
            <person name="Kamiya A."/>
            <person name="Meyers C."/>
            <person name="Nakajima M."/>
            <person name="Narusaka M."/>
            <person name="Seki M."/>
            <person name="Sakurai T."/>
            <person name="Satou M."/>
            <person name="Tamse R."/>
            <person name="Vaysberg M."/>
            <person name="Wallender E.K."/>
            <person name="Wong C."/>
            <person name="Yamamura Y."/>
            <person name="Yuan S."/>
            <person name="Shinozaki K."/>
            <person name="Davis R.W."/>
            <person name="Theologis A."/>
            <person name="Ecker J.R."/>
        </authorList>
    </citation>
    <scope>NUCLEOTIDE SEQUENCE [LARGE SCALE MRNA] (ISOFORM 2)</scope>
    <source>
        <strain>cv. Columbia</strain>
    </source>
</reference>
<reference key="4">
    <citation type="journal article" date="2010" name="BMC Genomics">
        <title>Genome-wide cloning and sequence analysis of leucine-rich repeat receptor-like protein kinase genes in Arabidopsis thaliana.</title>
        <authorList>
            <person name="Gou X."/>
            <person name="He K."/>
            <person name="Yang H."/>
            <person name="Yuan T."/>
            <person name="Lin H."/>
            <person name="Clouse S.D."/>
            <person name="Li J."/>
        </authorList>
    </citation>
    <scope>NUCLEOTIDE SEQUENCE [LARGE SCALE MRNA] (ISOFORM 1)</scope>
    <source>
        <strain>cv. Columbia</strain>
    </source>
</reference>
<name>Y5524_ARATH</name>
<organism>
    <name type="scientific">Arabidopsis thaliana</name>
    <name type="common">Mouse-ear cress</name>
    <dbReference type="NCBI Taxonomy" id="3702"/>
    <lineage>
        <taxon>Eukaryota</taxon>
        <taxon>Viridiplantae</taxon>
        <taxon>Streptophyta</taxon>
        <taxon>Embryophyta</taxon>
        <taxon>Tracheophyta</taxon>
        <taxon>Spermatophyta</taxon>
        <taxon>Magnoliopsida</taxon>
        <taxon>eudicotyledons</taxon>
        <taxon>Gunneridae</taxon>
        <taxon>Pentapetalae</taxon>
        <taxon>rosids</taxon>
        <taxon>malvids</taxon>
        <taxon>Brassicales</taxon>
        <taxon>Brassicaceae</taxon>
        <taxon>Camelineae</taxon>
        <taxon>Arabidopsis</taxon>
    </lineage>
</organism>
<gene>
    <name type="ordered locus">At5g65240</name>
    <name type="ORF">MQN23.19</name>
</gene>
<evidence type="ECO:0000250" key="1">
    <source>
        <dbReference type="UniProtKB" id="Q94AG2"/>
    </source>
</evidence>
<evidence type="ECO:0000250" key="2">
    <source>
        <dbReference type="UniProtKB" id="Q94F62"/>
    </source>
</evidence>
<evidence type="ECO:0000250" key="3">
    <source>
        <dbReference type="UniProtKB" id="Q9LSI9"/>
    </source>
</evidence>
<evidence type="ECO:0000255" key="4"/>
<evidence type="ECO:0000255" key="5">
    <source>
        <dbReference type="PROSITE-ProRule" id="PRU00159"/>
    </source>
</evidence>
<evidence type="ECO:0000255" key="6">
    <source>
        <dbReference type="PROSITE-ProRule" id="PRU10027"/>
    </source>
</evidence>
<evidence type="ECO:0000303" key="7">
    <source>
    </source>
</evidence>
<evidence type="ECO:0000305" key="8"/>
<comment type="catalytic activity">
    <reaction>
        <text>L-seryl-[protein] + ATP = O-phospho-L-seryl-[protein] + ADP + H(+)</text>
        <dbReference type="Rhea" id="RHEA:17989"/>
        <dbReference type="Rhea" id="RHEA-COMP:9863"/>
        <dbReference type="Rhea" id="RHEA-COMP:11604"/>
        <dbReference type="ChEBI" id="CHEBI:15378"/>
        <dbReference type="ChEBI" id="CHEBI:29999"/>
        <dbReference type="ChEBI" id="CHEBI:30616"/>
        <dbReference type="ChEBI" id="CHEBI:83421"/>
        <dbReference type="ChEBI" id="CHEBI:456216"/>
        <dbReference type="EC" id="2.7.11.1"/>
    </reaction>
</comment>
<comment type="catalytic activity">
    <reaction>
        <text>L-threonyl-[protein] + ATP = O-phospho-L-threonyl-[protein] + ADP + H(+)</text>
        <dbReference type="Rhea" id="RHEA:46608"/>
        <dbReference type="Rhea" id="RHEA-COMP:11060"/>
        <dbReference type="Rhea" id="RHEA-COMP:11605"/>
        <dbReference type="ChEBI" id="CHEBI:15378"/>
        <dbReference type="ChEBI" id="CHEBI:30013"/>
        <dbReference type="ChEBI" id="CHEBI:30616"/>
        <dbReference type="ChEBI" id="CHEBI:61977"/>
        <dbReference type="ChEBI" id="CHEBI:456216"/>
        <dbReference type="EC" id="2.7.11.1"/>
    </reaction>
</comment>
<comment type="subcellular location">
    <subcellularLocation>
        <location>Cell membrane</location>
        <topology>Single-pass type I membrane protein</topology>
    </subcellularLocation>
</comment>
<comment type="alternative products">
    <event type="alternative splicing"/>
    <isoform>
        <id>C0LGX1-1</id>
        <name>1</name>
        <sequence type="displayed"/>
    </isoform>
    <isoform>
        <id>C0LGX1-2</id>
        <name>2</name>
        <sequence type="described" ref="VSP_041397"/>
    </isoform>
</comment>
<comment type="miscellaneous">
    <molecule>Isoform 2</molecule>
    <text evidence="8">May be due to a competing acceptor splice site.</text>
</comment>
<comment type="similarity">
    <text evidence="5">Belongs to the protein kinase superfamily. Ser/Thr protein kinase family.</text>
</comment>
<comment type="sequence caution" evidence="8">
    <conflict type="erroneous gene model prediction">
        <sequence resource="EMBL-CDS" id="BAB11660"/>
    </conflict>
</comment>
<keyword id="KW-0025">Alternative splicing</keyword>
<keyword id="KW-0067">ATP-binding</keyword>
<keyword id="KW-1003">Cell membrane</keyword>
<keyword id="KW-0325">Glycoprotein</keyword>
<keyword id="KW-0418">Kinase</keyword>
<keyword id="KW-0433">Leucine-rich repeat</keyword>
<keyword id="KW-0472">Membrane</keyword>
<keyword id="KW-0547">Nucleotide-binding</keyword>
<keyword id="KW-0597">Phosphoprotein</keyword>
<keyword id="KW-0675">Receptor</keyword>
<keyword id="KW-1185">Reference proteome</keyword>
<keyword id="KW-0677">Repeat</keyword>
<keyword id="KW-0723">Serine/threonine-protein kinase</keyword>
<keyword id="KW-0732">Signal</keyword>
<keyword id="KW-0808">Transferase</keyword>
<keyword id="KW-0812">Transmembrane</keyword>
<keyword id="KW-1133">Transmembrane helix</keyword>
<proteinExistence type="evidence at transcript level"/>
<dbReference type="EC" id="2.7.11.1"/>
<dbReference type="EMBL" id="AB013395">
    <property type="protein sequence ID" value="BAB11660.1"/>
    <property type="status" value="ALT_SEQ"/>
    <property type="molecule type" value="Genomic_DNA"/>
</dbReference>
<dbReference type="EMBL" id="CP002688">
    <property type="protein sequence ID" value="AED98027.1"/>
    <property type="molecule type" value="Genomic_DNA"/>
</dbReference>
<dbReference type="EMBL" id="AY059844">
    <property type="protein sequence ID" value="AAL24326.1"/>
    <property type="molecule type" value="mRNA"/>
</dbReference>
<dbReference type="EMBL" id="BT006309">
    <property type="protein sequence ID" value="AAP13417.1"/>
    <property type="molecule type" value="mRNA"/>
</dbReference>
<dbReference type="EMBL" id="FJ708815">
    <property type="protein sequence ID" value="ACN59406.1"/>
    <property type="molecule type" value="mRNA"/>
</dbReference>
<dbReference type="RefSeq" id="NP_201327.4">
    <molecule id="C0LGX1-1"/>
    <property type="nucleotide sequence ID" value="NM_125922.5"/>
</dbReference>
<dbReference type="SMR" id="C0LGX1"/>
<dbReference type="BioGRID" id="21891">
    <property type="interactions" value="10"/>
</dbReference>
<dbReference type="FunCoup" id="C0LGX1">
    <property type="interactions" value="644"/>
</dbReference>
<dbReference type="IntAct" id="C0LGX1">
    <property type="interactions" value="10"/>
</dbReference>
<dbReference type="STRING" id="3702.C0LGX1"/>
<dbReference type="GlyGen" id="C0LGX1">
    <property type="glycosylation" value="6 sites"/>
</dbReference>
<dbReference type="iPTMnet" id="C0LGX1"/>
<dbReference type="PaxDb" id="3702-AT5G65240.2"/>
<dbReference type="ProteomicsDB" id="243162">
    <molecule id="C0LGX1-1"/>
</dbReference>
<dbReference type="EnsemblPlants" id="AT5G65240.1">
    <molecule id="C0LGX1-1"/>
    <property type="protein sequence ID" value="AT5G65240.1"/>
    <property type="gene ID" value="AT5G65240"/>
</dbReference>
<dbReference type="GeneID" id="836649"/>
<dbReference type="Gramene" id="AT5G65240.1">
    <molecule id="C0LGX1-1"/>
    <property type="protein sequence ID" value="AT5G65240.1"/>
    <property type="gene ID" value="AT5G65240"/>
</dbReference>
<dbReference type="KEGG" id="ath:AT5G65240"/>
<dbReference type="Araport" id="AT5G65240"/>
<dbReference type="TAIR" id="AT5G65240"/>
<dbReference type="eggNOG" id="ENOG502QPJ2">
    <property type="taxonomic scope" value="Eukaryota"/>
</dbReference>
<dbReference type="HOGENOM" id="CLU_000288_92_7_1"/>
<dbReference type="InParanoid" id="C0LGX1"/>
<dbReference type="OMA" id="NLTHHCE"/>
<dbReference type="PhylomeDB" id="C0LGX1"/>
<dbReference type="PRO" id="PR:C0LGX1"/>
<dbReference type="Proteomes" id="UP000006548">
    <property type="component" value="Chromosome 5"/>
</dbReference>
<dbReference type="ExpressionAtlas" id="C0LGX1">
    <property type="expression patterns" value="baseline and differential"/>
</dbReference>
<dbReference type="GO" id="GO:0005886">
    <property type="term" value="C:plasma membrane"/>
    <property type="evidence" value="ECO:0007669"/>
    <property type="project" value="UniProtKB-SubCell"/>
</dbReference>
<dbReference type="GO" id="GO:0005524">
    <property type="term" value="F:ATP binding"/>
    <property type="evidence" value="ECO:0007669"/>
    <property type="project" value="UniProtKB-KW"/>
</dbReference>
<dbReference type="GO" id="GO:0106310">
    <property type="term" value="F:protein serine kinase activity"/>
    <property type="evidence" value="ECO:0007669"/>
    <property type="project" value="RHEA"/>
</dbReference>
<dbReference type="GO" id="GO:0004674">
    <property type="term" value="F:protein serine/threonine kinase activity"/>
    <property type="evidence" value="ECO:0007669"/>
    <property type="project" value="UniProtKB-KW"/>
</dbReference>
<dbReference type="FunFam" id="3.80.10.10:FF:000150">
    <property type="entry name" value="Putative LRR receptor-like serine/threonine-protein kinase"/>
    <property type="match status" value="1"/>
</dbReference>
<dbReference type="FunFam" id="3.30.200.20:FF:000015">
    <property type="entry name" value="Somatic embryogenesis receptor kinase 1"/>
    <property type="match status" value="1"/>
</dbReference>
<dbReference type="FunFam" id="1.10.510.10:FF:000016">
    <property type="entry name" value="Somatic embryogenesis receptor-like kinase 1"/>
    <property type="match status" value="1"/>
</dbReference>
<dbReference type="Gene3D" id="3.30.200.20">
    <property type="entry name" value="Phosphorylase Kinase, domain 1"/>
    <property type="match status" value="1"/>
</dbReference>
<dbReference type="Gene3D" id="3.80.10.10">
    <property type="entry name" value="Ribonuclease Inhibitor"/>
    <property type="match status" value="1"/>
</dbReference>
<dbReference type="Gene3D" id="1.10.510.10">
    <property type="entry name" value="Transferase(Phosphotransferase) domain 1"/>
    <property type="match status" value="1"/>
</dbReference>
<dbReference type="InterPro" id="IPR011009">
    <property type="entry name" value="Kinase-like_dom_sf"/>
</dbReference>
<dbReference type="InterPro" id="IPR001611">
    <property type="entry name" value="Leu-rich_rpt"/>
</dbReference>
<dbReference type="InterPro" id="IPR032675">
    <property type="entry name" value="LRR_dom_sf"/>
</dbReference>
<dbReference type="InterPro" id="IPR013210">
    <property type="entry name" value="LRR_N_plant-typ"/>
</dbReference>
<dbReference type="InterPro" id="IPR051824">
    <property type="entry name" value="LRR_Rcpt-Like_S/T_Kinase"/>
</dbReference>
<dbReference type="InterPro" id="IPR000719">
    <property type="entry name" value="Prot_kinase_dom"/>
</dbReference>
<dbReference type="InterPro" id="IPR017441">
    <property type="entry name" value="Protein_kinase_ATP_BS"/>
</dbReference>
<dbReference type="InterPro" id="IPR001245">
    <property type="entry name" value="Ser-Thr/Tyr_kinase_cat_dom"/>
</dbReference>
<dbReference type="InterPro" id="IPR008271">
    <property type="entry name" value="Ser/Thr_kinase_AS"/>
</dbReference>
<dbReference type="PANTHER" id="PTHR48006">
    <property type="entry name" value="LEUCINE-RICH REPEAT-CONTAINING PROTEIN DDB_G0281931-RELATED"/>
    <property type="match status" value="1"/>
</dbReference>
<dbReference type="PANTHER" id="PTHR48006:SF102">
    <property type="entry name" value="LEUCINE-RICH REPEAT-CONTAINING PROTEIN DDB_G0281931-RELATED"/>
    <property type="match status" value="1"/>
</dbReference>
<dbReference type="Pfam" id="PF00560">
    <property type="entry name" value="LRR_1"/>
    <property type="match status" value="1"/>
</dbReference>
<dbReference type="Pfam" id="PF13855">
    <property type="entry name" value="LRR_8"/>
    <property type="match status" value="1"/>
</dbReference>
<dbReference type="Pfam" id="PF08263">
    <property type="entry name" value="LRRNT_2"/>
    <property type="match status" value="1"/>
</dbReference>
<dbReference type="Pfam" id="PF07714">
    <property type="entry name" value="PK_Tyr_Ser-Thr"/>
    <property type="match status" value="1"/>
</dbReference>
<dbReference type="SMART" id="SM00220">
    <property type="entry name" value="S_TKc"/>
    <property type="match status" value="1"/>
</dbReference>
<dbReference type="SUPFAM" id="SSF52058">
    <property type="entry name" value="L domain-like"/>
    <property type="match status" value="1"/>
</dbReference>
<dbReference type="SUPFAM" id="SSF56112">
    <property type="entry name" value="Protein kinase-like (PK-like)"/>
    <property type="match status" value="1"/>
</dbReference>
<dbReference type="PROSITE" id="PS00107">
    <property type="entry name" value="PROTEIN_KINASE_ATP"/>
    <property type="match status" value="1"/>
</dbReference>
<dbReference type="PROSITE" id="PS50011">
    <property type="entry name" value="PROTEIN_KINASE_DOM"/>
    <property type="match status" value="1"/>
</dbReference>
<dbReference type="PROSITE" id="PS00108">
    <property type="entry name" value="PROTEIN_KINASE_ST"/>
    <property type="match status" value="1"/>
</dbReference>
<feature type="signal peptide" evidence="4">
    <location>
        <begin position="1"/>
        <end position="24"/>
    </location>
</feature>
<feature type="chain" id="PRO_0000409729" description="Probable LRR receptor-like serine/threonine-protein kinase At5g65240">
    <location>
        <begin position="25"/>
        <end position="607"/>
    </location>
</feature>
<feature type="topological domain" description="Extracellular" evidence="4">
    <location>
        <begin position="25"/>
        <end position="219"/>
    </location>
</feature>
<feature type="transmembrane region" description="Helical" evidence="4">
    <location>
        <begin position="220"/>
        <end position="240"/>
    </location>
</feature>
<feature type="topological domain" description="Cytoplasmic" evidence="4">
    <location>
        <begin position="241"/>
        <end position="607"/>
    </location>
</feature>
<feature type="repeat" description="LRR 1">
    <location>
        <begin position="87"/>
        <end position="111"/>
    </location>
</feature>
<feature type="repeat" description="LRR 2">
    <location>
        <begin position="112"/>
        <end position="135"/>
    </location>
</feature>
<feature type="repeat" description="LRR 3">
    <location>
        <begin position="137"/>
        <end position="159"/>
    </location>
</feature>
<feature type="repeat" description="LRR 4">
    <location>
        <begin position="160"/>
        <end position="183"/>
    </location>
</feature>
<feature type="domain" description="Protein kinase" evidence="5">
    <location>
        <begin position="284"/>
        <end position="568"/>
    </location>
</feature>
<feature type="active site" description="Proton acceptor" evidence="5 6">
    <location>
        <position position="411"/>
    </location>
</feature>
<feature type="binding site" evidence="5">
    <location>
        <begin position="290"/>
        <end position="298"/>
    </location>
    <ligand>
        <name>ATP</name>
        <dbReference type="ChEBI" id="CHEBI:30616"/>
    </ligand>
</feature>
<feature type="binding site" evidence="5">
    <location>
        <position position="312"/>
    </location>
    <ligand>
        <name>ATP</name>
        <dbReference type="ChEBI" id="CHEBI:30616"/>
    </ligand>
</feature>
<feature type="modified residue" description="Phosphothreonine" evidence="3">
    <location>
        <position position="281"/>
    </location>
</feature>
<feature type="modified residue" description="Phosphothreonine" evidence="2">
    <location>
        <position position="307"/>
    </location>
</feature>
<feature type="modified residue" description="Phosphoserine" evidence="1">
    <location>
        <position position="365"/>
    </location>
</feature>
<feature type="modified residue" description="Phosphothreonine" evidence="2">
    <location>
        <position position="444"/>
    </location>
</feature>
<feature type="modified residue" description="Phosphothreonine" evidence="2">
    <location>
        <position position="445"/>
    </location>
</feature>
<feature type="modified residue" description="Phosphothreonine" evidence="2">
    <location>
        <position position="450"/>
    </location>
</feature>
<feature type="modified residue" description="Phosphoserine" evidence="1">
    <location>
        <position position="460"/>
    </location>
</feature>
<feature type="modified residue" description="Phosphothreonine" evidence="1">
    <location>
        <position position="461"/>
    </location>
</feature>
<feature type="modified residue" description="Phosphoserine" evidence="1">
    <location>
        <position position="465"/>
    </location>
</feature>
<feature type="modified residue" description="Phosphothreonine" evidence="1">
    <location>
        <position position="541"/>
    </location>
</feature>
<feature type="glycosylation site" description="N-linked (GlcNAc...) asparagine" evidence="4">
    <location>
        <position position="74"/>
    </location>
</feature>
<feature type="glycosylation site" description="N-linked (GlcNAc...) asparagine" evidence="4">
    <location>
        <position position="110"/>
    </location>
</feature>
<feature type="glycosylation site" description="N-linked (GlcNAc...) asparagine" evidence="4">
    <location>
        <position position="149"/>
    </location>
</feature>
<feature type="glycosylation site" description="N-linked (GlcNAc...) asparagine" evidence="4">
    <location>
        <position position="171"/>
    </location>
</feature>
<feature type="glycosylation site" description="N-linked (GlcNAc...) asparagine" evidence="4">
    <location>
        <position position="187"/>
    </location>
</feature>
<feature type="glycosylation site" description="N-linked (GlcNAc...) asparagine" evidence="4">
    <location>
        <position position="192"/>
    </location>
</feature>
<feature type="splice variant" id="VSP_041397" description="In isoform 2." evidence="7">
    <location>
        <begin position="1"/>
        <end position="331"/>
    </location>
</feature>
<protein>
    <recommendedName>
        <fullName>Probable LRR receptor-like serine/threonine-protein kinase At5g65240</fullName>
        <ecNumber>2.7.11.1</ecNumber>
    </recommendedName>
</protein>